<reference key="1">
    <citation type="journal article" date="2004" name="Nat. Genet.">
        <title>Evidence in the Legionella pneumophila genome for exploitation of host cell functions and high genome plasticity.</title>
        <authorList>
            <person name="Cazalet C."/>
            <person name="Rusniok C."/>
            <person name="Brueggemann H."/>
            <person name="Zidane N."/>
            <person name="Magnier A."/>
            <person name="Ma L."/>
            <person name="Tichit M."/>
            <person name="Jarraud S."/>
            <person name="Bouchier C."/>
            <person name="Vandenesch F."/>
            <person name="Kunst F."/>
            <person name="Etienne J."/>
            <person name="Glaser P."/>
            <person name="Buchrieser C."/>
        </authorList>
    </citation>
    <scope>NUCLEOTIDE SEQUENCE [LARGE SCALE GENOMIC DNA]</scope>
    <source>
        <strain>Paris</strain>
    </source>
</reference>
<organism>
    <name type="scientific">Legionella pneumophila (strain Paris)</name>
    <dbReference type="NCBI Taxonomy" id="297246"/>
    <lineage>
        <taxon>Bacteria</taxon>
        <taxon>Pseudomonadati</taxon>
        <taxon>Pseudomonadota</taxon>
        <taxon>Gammaproteobacteria</taxon>
        <taxon>Legionellales</taxon>
        <taxon>Legionellaceae</taxon>
        <taxon>Legionella</taxon>
    </lineage>
</organism>
<evidence type="ECO:0000255" key="1">
    <source>
        <dbReference type="HAMAP-Rule" id="MF_00564"/>
    </source>
</evidence>
<name>RNPH_LEGPA</name>
<gene>
    <name evidence="1" type="primary">rph</name>
    <name type="ordered locus">lpp1994</name>
</gene>
<keyword id="KW-0548">Nucleotidyltransferase</keyword>
<keyword id="KW-0694">RNA-binding</keyword>
<keyword id="KW-0698">rRNA processing</keyword>
<keyword id="KW-0808">Transferase</keyword>
<keyword id="KW-0819">tRNA processing</keyword>
<keyword id="KW-0820">tRNA-binding</keyword>
<dbReference type="EC" id="2.7.7.56" evidence="1"/>
<dbReference type="EMBL" id="CR628336">
    <property type="protein sequence ID" value="CAH13146.1"/>
    <property type="molecule type" value="Genomic_DNA"/>
</dbReference>
<dbReference type="RefSeq" id="WP_010947728.1">
    <property type="nucleotide sequence ID" value="NC_006368.1"/>
</dbReference>
<dbReference type="SMR" id="Q5X3P0"/>
<dbReference type="GeneID" id="57036006"/>
<dbReference type="KEGG" id="lpp:lpp1994"/>
<dbReference type="LegioList" id="lpp1994"/>
<dbReference type="HOGENOM" id="CLU_050858_0_0_6"/>
<dbReference type="GO" id="GO:0000175">
    <property type="term" value="F:3'-5'-RNA exonuclease activity"/>
    <property type="evidence" value="ECO:0007669"/>
    <property type="project" value="UniProtKB-UniRule"/>
</dbReference>
<dbReference type="GO" id="GO:0000049">
    <property type="term" value="F:tRNA binding"/>
    <property type="evidence" value="ECO:0007669"/>
    <property type="project" value="UniProtKB-UniRule"/>
</dbReference>
<dbReference type="GO" id="GO:0009022">
    <property type="term" value="F:tRNA nucleotidyltransferase activity"/>
    <property type="evidence" value="ECO:0007669"/>
    <property type="project" value="UniProtKB-UniRule"/>
</dbReference>
<dbReference type="GO" id="GO:0016075">
    <property type="term" value="P:rRNA catabolic process"/>
    <property type="evidence" value="ECO:0007669"/>
    <property type="project" value="UniProtKB-UniRule"/>
</dbReference>
<dbReference type="GO" id="GO:0006364">
    <property type="term" value="P:rRNA processing"/>
    <property type="evidence" value="ECO:0007669"/>
    <property type="project" value="UniProtKB-KW"/>
</dbReference>
<dbReference type="GO" id="GO:0008033">
    <property type="term" value="P:tRNA processing"/>
    <property type="evidence" value="ECO:0007669"/>
    <property type="project" value="UniProtKB-UniRule"/>
</dbReference>
<dbReference type="CDD" id="cd11362">
    <property type="entry name" value="RNase_PH_bact"/>
    <property type="match status" value="1"/>
</dbReference>
<dbReference type="FunFam" id="3.30.230.70:FF:000003">
    <property type="entry name" value="Ribonuclease PH"/>
    <property type="match status" value="1"/>
</dbReference>
<dbReference type="Gene3D" id="3.30.230.70">
    <property type="entry name" value="GHMP Kinase, N-terminal domain"/>
    <property type="match status" value="1"/>
</dbReference>
<dbReference type="HAMAP" id="MF_00564">
    <property type="entry name" value="RNase_PH"/>
    <property type="match status" value="1"/>
</dbReference>
<dbReference type="InterPro" id="IPR001247">
    <property type="entry name" value="ExoRNase_PH_dom1"/>
</dbReference>
<dbReference type="InterPro" id="IPR015847">
    <property type="entry name" value="ExoRNase_PH_dom2"/>
</dbReference>
<dbReference type="InterPro" id="IPR036345">
    <property type="entry name" value="ExoRNase_PH_dom2_sf"/>
</dbReference>
<dbReference type="InterPro" id="IPR027408">
    <property type="entry name" value="PNPase/RNase_PH_dom_sf"/>
</dbReference>
<dbReference type="InterPro" id="IPR020568">
    <property type="entry name" value="Ribosomal_Su5_D2-typ_SF"/>
</dbReference>
<dbReference type="InterPro" id="IPR050080">
    <property type="entry name" value="RNase_PH"/>
</dbReference>
<dbReference type="InterPro" id="IPR002381">
    <property type="entry name" value="RNase_PH_bac-type"/>
</dbReference>
<dbReference type="InterPro" id="IPR018336">
    <property type="entry name" value="RNase_PH_CS"/>
</dbReference>
<dbReference type="NCBIfam" id="TIGR01966">
    <property type="entry name" value="RNasePH"/>
    <property type="match status" value="1"/>
</dbReference>
<dbReference type="PANTHER" id="PTHR11953">
    <property type="entry name" value="EXOSOME COMPLEX COMPONENT"/>
    <property type="match status" value="1"/>
</dbReference>
<dbReference type="PANTHER" id="PTHR11953:SF0">
    <property type="entry name" value="EXOSOME COMPLEX COMPONENT RRP41"/>
    <property type="match status" value="1"/>
</dbReference>
<dbReference type="Pfam" id="PF01138">
    <property type="entry name" value="RNase_PH"/>
    <property type="match status" value="1"/>
</dbReference>
<dbReference type="Pfam" id="PF03725">
    <property type="entry name" value="RNase_PH_C"/>
    <property type="match status" value="1"/>
</dbReference>
<dbReference type="SUPFAM" id="SSF55666">
    <property type="entry name" value="Ribonuclease PH domain 2-like"/>
    <property type="match status" value="1"/>
</dbReference>
<dbReference type="SUPFAM" id="SSF54211">
    <property type="entry name" value="Ribosomal protein S5 domain 2-like"/>
    <property type="match status" value="1"/>
</dbReference>
<dbReference type="PROSITE" id="PS01277">
    <property type="entry name" value="RIBONUCLEASE_PH"/>
    <property type="match status" value="1"/>
</dbReference>
<comment type="function">
    <text evidence="1">Phosphorolytic 3'-5' exoribonuclease that plays an important role in tRNA 3'-end maturation. Removes nucleotide residues following the 3'-CCA terminus of tRNAs; can also add nucleotides to the ends of RNA molecules by using nucleoside diphosphates as substrates, but this may not be physiologically important. Probably plays a role in initiation of 16S rRNA degradation (leading to ribosome degradation) during starvation.</text>
</comment>
<comment type="catalytic activity">
    <reaction evidence="1">
        <text>tRNA(n+1) + phosphate = tRNA(n) + a ribonucleoside 5'-diphosphate</text>
        <dbReference type="Rhea" id="RHEA:10628"/>
        <dbReference type="Rhea" id="RHEA-COMP:17343"/>
        <dbReference type="Rhea" id="RHEA-COMP:17344"/>
        <dbReference type="ChEBI" id="CHEBI:43474"/>
        <dbReference type="ChEBI" id="CHEBI:57930"/>
        <dbReference type="ChEBI" id="CHEBI:173114"/>
        <dbReference type="EC" id="2.7.7.56"/>
    </reaction>
</comment>
<comment type="subunit">
    <text evidence="1">Homohexameric ring arranged as a trimer of dimers.</text>
</comment>
<comment type="similarity">
    <text evidence="1">Belongs to the RNase PH family.</text>
</comment>
<protein>
    <recommendedName>
        <fullName evidence="1">Ribonuclease PH</fullName>
        <shortName evidence="1">RNase PH</shortName>
        <ecNumber evidence="1">2.7.7.56</ecNumber>
    </recommendedName>
    <alternativeName>
        <fullName evidence="1">tRNA nucleotidyltransferase</fullName>
    </alternativeName>
</protein>
<proteinExistence type="inferred from homology"/>
<sequence length="235" mass="26110">MRPSNREHDQLRPVTITRNFTNYAEGSVLVEFGQTKVICNASIVEGVPRFLKGKNQGWITAEYGMLPRATHSRTEREASKGKQGGRTLEIQRLIGRSLRACIDLKVLGENTITLDCDVIQADGGTRTAAITGSCVAMRDAIHWMVQREKIKKMPAFNYVAAVSVGIYRGQPVLDLDYAEDVLAETDMNVVMNEQGHFIEVQGTAEDNSFNREQLNSMLSLAEIGIPQLIEIQKNA</sequence>
<accession>Q5X3P0</accession>
<feature type="chain" id="PRO_0000139899" description="Ribonuclease PH">
    <location>
        <begin position="1"/>
        <end position="235"/>
    </location>
</feature>
<feature type="binding site" evidence="1">
    <location>
        <position position="86"/>
    </location>
    <ligand>
        <name>phosphate</name>
        <dbReference type="ChEBI" id="CHEBI:43474"/>
        <note>substrate</note>
    </ligand>
</feature>
<feature type="binding site" evidence="1">
    <location>
        <begin position="124"/>
        <end position="126"/>
    </location>
    <ligand>
        <name>phosphate</name>
        <dbReference type="ChEBI" id="CHEBI:43474"/>
        <note>substrate</note>
    </ligand>
</feature>